<organism>
    <name type="scientific">Human immunodeficiency virus type 1 group M subtype G (isolate 92NG083)</name>
    <name type="common">HIV-1</name>
    <dbReference type="NCBI Taxonomy" id="388825"/>
    <lineage>
        <taxon>Viruses</taxon>
        <taxon>Riboviria</taxon>
        <taxon>Pararnavirae</taxon>
        <taxon>Artverviricota</taxon>
        <taxon>Revtraviricetes</taxon>
        <taxon>Ortervirales</taxon>
        <taxon>Retroviridae</taxon>
        <taxon>Orthoretrovirinae</taxon>
        <taxon>Lentivirus</taxon>
        <taxon>Human immunodeficiency virus type 1</taxon>
    </lineage>
</organism>
<protein>
    <recommendedName>
        <fullName evidence="1">Envelope glycoprotein gp160</fullName>
    </recommendedName>
    <alternativeName>
        <fullName evidence="1">Env polyprotein</fullName>
    </alternativeName>
    <component>
        <recommendedName>
            <fullName evidence="1">Surface protein gp120</fullName>
            <shortName evidence="1">SU</shortName>
        </recommendedName>
        <alternativeName>
            <fullName evidence="1">Glycoprotein 120</fullName>
            <shortName evidence="1">gp120</shortName>
        </alternativeName>
    </component>
    <component>
        <recommendedName>
            <fullName evidence="1">Transmembrane protein gp41</fullName>
            <shortName evidence="1">TM</shortName>
        </recommendedName>
        <alternativeName>
            <fullName evidence="1">Glycoprotein 41</fullName>
            <shortName evidence="1">gp41</shortName>
        </alternativeName>
    </component>
</protein>
<comment type="function">
    <molecule>Envelope glycoprotein gp160</molecule>
    <text evidence="1">Oligomerizes in the host endoplasmic reticulum into predominantly trimers. In a second time, gp160 transits in the host Golgi, where glycosylation is completed. The precursor is then proteolytically cleaved in the trans-Golgi and thereby activated by cellular furin or furin-like proteases to produce gp120 and gp41.</text>
</comment>
<comment type="function">
    <molecule>Surface protein gp120</molecule>
    <text evidence="1">Attaches the virus to the host lymphoid cell by binding to the primary receptor CD4. This interaction induces a structural rearrangement creating a high affinity binding site for a chemokine coreceptor like CXCR4 and/or CCR5. Acts as a ligand for CD209/DC-SIGN and CLEC4M/DC-SIGNR, which are respectively found on dendritic cells (DCs), and on endothelial cells of liver sinusoids and lymph node sinuses. These interactions allow capture of viral particles at mucosal surfaces by these cells and subsequent transmission to permissive cells. HIV subverts the migration properties of dendritic cells to gain access to CD4+ T-cells in lymph nodes. Virus transmission to permissive T-cells occurs either in trans (without DCs infection, through viral capture and transmission), or in cis (following DCs productive infection, through the usual CD4-gp120 interaction), thereby inducing a robust infection. In trans infection, bound virions remain infectious over days and it is proposed that they are not degraded, but protected in non-lysosomal acidic organelles within the DCs close to the cell membrane thus contributing to the viral infectious potential during DCs' migration from the periphery to the lymphoid tissues. On arrival at lymphoid tissues, intact virions recycle back to DCs' cell surface allowing virus transmission to CD4+ T-cells.</text>
</comment>
<comment type="function">
    <molecule>Transmembrane protein gp41</molecule>
    <text evidence="1">Acts as a class I viral fusion protein. Under the current model, the protein has at least 3 conformational states: pre-fusion native state, pre-hairpin intermediate state, and post-fusion hairpin state. During fusion of viral and target intracellular membranes, the coiled coil regions (heptad repeats) assume a trimer-of-hairpins structure, positioning the fusion peptide in close proximity to the C-terminal region of the ectodomain. The formation of this structure appears to drive apposition and subsequent fusion of viral and target cell membranes. Complete fusion occurs in host cell endosomes and is dynamin-dependent, however some lipid transfer might occur at the plasma membrane. The virus undergoes clathrin-dependent internalization long before endosomal fusion, thus minimizing the surface exposure of conserved viral epitopes during fusion and reducing the efficacy of inhibitors targeting these epitopes. Membranes fusion leads to delivery of the nucleocapsid into the cytoplasm.</text>
</comment>
<comment type="subunit">
    <molecule>Surface protein gp120</molecule>
    <text evidence="1">The mature envelope protein (Env) consists of a homotrimer of non-covalently associated gp120-gp41 heterodimers. The resulting complex protrudes from the virus surface as a spike. There seems to be as few as 10 spikes on the average virion. Interacts with host CD4, CCR5 and CXCR4. Gp120 also interacts with the C-type lectins CD209/DC-SIGN and CLEC4M/DC-SIGNR (collectively referred to as DC-SIGN(R)). Gp120 and gp41 interact with GalCer. Gp120 interacts with host ITGA4/ITGB7 complex; on CD4+ T-cells, this interaction results in rapid activation of integrin ITGAL/LFA-1, which facilitates efficient cell-to-cell spreading of HIV-1. Gp120 interacts with cell-associated heparan sulfate; this interaction increases virus infectivity on permissive cells and may be involved in infection of CD4- cells.</text>
</comment>
<comment type="subunit">
    <molecule>Transmembrane protein gp41</molecule>
    <text evidence="1">The mature envelope protein (Env) consists of a homotrimer of non-covalently associated gp120-gp41 heterodimers. The resulting complex protrudes from the virus surface as a spike. There seems to be as few as 10 spikes on the average virion.</text>
</comment>
<comment type="subcellular location">
    <molecule>Surface protein gp120</molecule>
    <subcellularLocation>
        <location evidence="1">Virion membrane</location>
        <topology evidence="1">Peripheral membrane protein</topology>
    </subcellularLocation>
    <subcellularLocation>
        <location evidence="1">Host cell membrane</location>
        <topology evidence="1">Peripheral membrane protein</topology>
    </subcellularLocation>
    <subcellularLocation>
        <location evidence="1">Host endosome membrane</location>
        <topology evidence="1">Single-pass type I membrane protein</topology>
    </subcellularLocation>
    <text evidence="1">The surface protein is not anchored to the viral envelope, but associates with the extravirion surface through its binding to TM. It is probably concentrated at the site of budding and incorporated into the virions possibly by contacts between the cytoplasmic tail of Env and the N-terminus of Gag.</text>
</comment>
<comment type="subcellular location">
    <molecule>Transmembrane protein gp41</molecule>
    <subcellularLocation>
        <location evidence="1">Virion membrane</location>
        <topology evidence="1">Single-pass type I membrane protein</topology>
    </subcellularLocation>
    <subcellularLocation>
        <location evidence="1">Host cell membrane</location>
        <topology evidence="1">Single-pass type I membrane protein</topology>
    </subcellularLocation>
    <subcellularLocation>
        <location evidence="1">Host endosome membrane</location>
        <topology evidence="1">Single-pass type I membrane protein</topology>
    </subcellularLocation>
    <text evidence="1">It is probably concentrated at the site of budding and incorporated into the virions possibly by contacts between the cytoplasmic tail of Env and the N-terminus of Gag.</text>
</comment>
<comment type="domain">
    <text evidence="1">Some of the most genetically diverse regions of the viral genome are present in Env. They are called variable regions 1 through 5 (V1 through V5). Coreceptor usage of gp120 is determined mainly by the primary structure of the third variable region (V3) in the outer domain of gp120. The sequence of V3 determines which coreceptor, CCR5 and/or CXCR4 (corresponding to R5/macrophage, X4/T cell and R5X4/T cell and macrophage tropism), is used to trigger the fusion potential of the Env complex, and hence which cells the virus can infect. Binding to CCR5 involves a region adjacent in addition to V3.</text>
</comment>
<comment type="domain">
    <text evidence="1">The membrane proximal external region (MPER) present in gp41 is a tryptophan-rich region recognized by the antibodies 2F5, Z13, and 4E10. MPER seems to play a role in fusion.</text>
</comment>
<comment type="domain">
    <text evidence="1">The 17 amino acids long immunosuppressive region is present in many retroviral envelope proteins. Synthetic peptides derived from this relatively conserved sequence inhibit immune function in vitro and in vivo.</text>
</comment>
<comment type="domain">
    <text evidence="1">The YXXL motif is involved in determining the exact site of viral release at the surface of infected mononuclear cells and promotes endocytosis. YXXL and di-leucine endocytosis motifs interact directly or indirectly with the clathrin adapter complexes, opperate independently, and their activities are not additive.</text>
</comment>
<comment type="domain">
    <text evidence="1">The CD4-binding region is targeted by the antibody b12.</text>
</comment>
<comment type="PTM">
    <text evidence="1">Highly glycosylated by host. The high number of glycan on the protein is reffered to as 'glycan shield' because it contributes to hide protein sequence from adaptive immune system.</text>
</comment>
<comment type="PTM">
    <text evidence="1">Palmitoylation of the transmembrane protein and of Env polyprotein (prior to its proteolytic cleavage) is essential for their association with host cell membrane lipid rafts. Palmitoylation is therefore required for envelope trafficking to classical lipid rafts, but not for viral replication.</text>
</comment>
<comment type="PTM">
    <text evidence="1">Specific enzymatic cleavages in vivo yield mature proteins. Envelope glycoproteins are synthesized as an inactive precursor that is heavily N-glycosylated and processed likely by host cell furin in the Golgi to yield the mature SU and TM proteins. The cleavage site between SU and TM requires the minimal sequence [KR]-X-[KR]-R. About 2 of the 9 disulfide bonds of gp41 are reduced by P4HB/PDI, following binding to CD4 receptor.</text>
</comment>
<comment type="miscellaneous">
    <text evidence="1">Inhibitors targeting HIV-1 viral envelope proteins are used as antiretroviral drugs. Attachment of virions to the cell surface via non-specific interactions and CD4 binding can be blocked by inhibitors that include cyanovirin-N, cyclotriazadisulfonamide analogs, PRO 2000, TNX 355 and PRO 542. In addition, BMS 806 can block CD4-induced conformational changes. Env interactions with the coreceptor molecules can be targeted by CCR5 antagonists including SCH-D, maraviroc (UK 427857) and aplaviroc (GW 873140), and the CXCR4 antagonist AMD 070. Fusion of viral and cellular membranes can be inhibited by peptides such as enfuvirtide and tifuvirtide (T 1249). Resistance to inhibitors associated with mutations in Env are observed. Most of the time, single mutations confer only a modest reduction in drug susceptibility. Combination of several mutations is usually required to develop a high-level drug resistance.</text>
</comment>
<comment type="miscellaneous">
    <text evidence="1">HIV-1 lineages are divided in three main groups, M (for Major), O (for Outlier), and N (for New, or Non-M, Non-O). The vast majority of strains found worldwide belong to the group M. Group O seems to be endemic to and largely confined to Cameroon and neighboring countries in West Central Africa, where these viruses represent a small minority of HIV-1 strains. The group N is represented by a limited number of isolates from Cameroonian persons. The group M is further subdivided in 9 clades or subtypes (A to D, F to H, J and K).</text>
</comment>
<comment type="similarity">
    <text evidence="1">Belongs to the HIV-1 env protein family.</text>
</comment>
<comment type="online information" name="hivdb">
    <link uri="https://hivdb.stanford.edu"/>
    <text>HIV drug resistance database</text>
</comment>
<comment type="online information" name="HIV drug resistance mutations">
    <link uri="https://www.iasusa.org/hiv-drug-resistance/hiv-drug-resistance-mutations/"/>
</comment>
<accession>O41803</accession>
<name>ENV_HV19N</name>
<sequence length="849" mass="96397">MRVKGIQRNWQHLWKWGTLILGLVIICSASDNLWVTVYYGVPVWEDADTPLFCASDAKSYSSEKHNVWATHACVPTDPNPQEIAIENVTENFNMWKNNMVEQMQEDIISLWEESLKPCVKLTPLCITLNCTNVNSANHTEANNTVENKEEIKNCSFKITTERGGKKKEEYALFYKLDVVPISNGNKTSYRLIHCNVSTIKQACPKVNFDPIPIHYCAPAGFAILKCRDKEYNGTGPCKNVSTVQCTHGIKPVVSTQLLLNGSLAEEDIRIRSENFTDNTKVIIVQLNNSIEINCIRPNNNTRKSIPIGPGQAFYATGDIIGDIRQAHCNVSRIKWREMLKNVTAQLRKIYNNKNITFNSSAGGDLEITTHSFNCRGEFFYCNTSGLFNNNISNINNETITLPCKIKQIVRMWQKVGQAMYALPIAGNLVCKSNITGLILTRDGGNNNDSTEETFRPGGGDMRDNWRSELYKYKTVKIKSLGVAPTRARRRVVEREKRAVGLGAVFLGFLGAAGSTMGAASITLTAQVRQLLSGIVQQQSNLLRAIEAQQHLLQLTVWGIKQLQSRVLAIERYLKDQQLLGIWGCSGKLICTTNVPWNTSWSNKSYNEIWDNMTWLEWEREIHNYTQHIYSLIEESQNQQEKNEQDLLALDKWASLWNWFDISNWLWYIRIFIMIVGGLIGLRIVFAVLSIVNRVRQGYSPLSFQTLTHHQREPDRLGKTEEGGGEQDRDRSTRLVSGFLALAWDDLRSLCLFSYHRLRDLVLIAARTVELLGRSSLKGLRLGWEGLKYLWNLLLYWGRELKNSAINLLDTIAIATANGTDRVIEVAQRAYRAILNVPTRIRQGLERALL</sequence>
<organismHost>
    <name type="scientific">Homo sapiens</name>
    <name type="common">Human</name>
    <dbReference type="NCBI Taxonomy" id="9606"/>
</organismHost>
<gene>
    <name evidence="1" type="primary">env</name>
</gene>
<dbReference type="EMBL" id="U88826">
    <property type="protein sequence ID" value="AAC32655.1"/>
    <property type="molecule type" value="Genomic_DNA"/>
</dbReference>
<dbReference type="SMR" id="O41803"/>
<dbReference type="GlyCosmos" id="O41803">
    <property type="glycosylation" value="26 sites, No reported glycans"/>
</dbReference>
<dbReference type="Proteomes" id="UP000128912">
    <property type="component" value="Segment"/>
</dbReference>
<dbReference type="GO" id="GO:0044175">
    <property type="term" value="C:host cell endosome membrane"/>
    <property type="evidence" value="ECO:0007669"/>
    <property type="project" value="UniProtKB-SubCell"/>
</dbReference>
<dbReference type="GO" id="GO:0020002">
    <property type="term" value="C:host cell plasma membrane"/>
    <property type="evidence" value="ECO:0007669"/>
    <property type="project" value="UniProtKB-SubCell"/>
</dbReference>
<dbReference type="GO" id="GO:0016020">
    <property type="term" value="C:membrane"/>
    <property type="evidence" value="ECO:0007669"/>
    <property type="project" value="UniProtKB-UniRule"/>
</dbReference>
<dbReference type="GO" id="GO:0019031">
    <property type="term" value="C:viral envelope"/>
    <property type="evidence" value="ECO:0007669"/>
    <property type="project" value="UniProtKB-KW"/>
</dbReference>
<dbReference type="GO" id="GO:0055036">
    <property type="term" value="C:virion membrane"/>
    <property type="evidence" value="ECO:0007669"/>
    <property type="project" value="UniProtKB-SubCell"/>
</dbReference>
<dbReference type="GO" id="GO:0005198">
    <property type="term" value="F:structural molecule activity"/>
    <property type="evidence" value="ECO:0007669"/>
    <property type="project" value="UniProtKB-UniRule"/>
</dbReference>
<dbReference type="GO" id="GO:0075512">
    <property type="term" value="P:clathrin-dependent endocytosis of virus by host cell"/>
    <property type="evidence" value="ECO:0007669"/>
    <property type="project" value="UniProtKB-UniRule"/>
</dbReference>
<dbReference type="GO" id="GO:0039654">
    <property type="term" value="P:fusion of virus membrane with host endosome membrane"/>
    <property type="evidence" value="ECO:0007669"/>
    <property type="project" value="UniProtKB-UniRule"/>
</dbReference>
<dbReference type="GO" id="GO:0019064">
    <property type="term" value="P:fusion of virus membrane with host plasma membrane"/>
    <property type="evidence" value="ECO:0007669"/>
    <property type="project" value="UniProtKB-UniRule"/>
</dbReference>
<dbReference type="GO" id="GO:1903908">
    <property type="term" value="P:positive regulation of plasma membrane raft polarization"/>
    <property type="evidence" value="ECO:0007669"/>
    <property type="project" value="UniProtKB-UniRule"/>
</dbReference>
<dbReference type="GO" id="GO:1903911">
    <property type="term" value="P:positive regulation of receptor clustering"/>
    <property type="evidence" value="ECO:0007669"/>
    <property type="project" value="UniProtKB-UniRule"/>
</dbReference>
<dbReference type="GO" id="GO:0019082">
    <property type="term" value="P:viral protein processing"/>
    <property type="evidence" value="ECO:0007669"/>
    <property type="project" value="UniProtKB-UniRule"/>
</dbReference>
<dbReference type="GO" id="GO:0019062">
    <property type="term" value="P:virion attachment to host cell"/>
    <property type="evidence" value="ECO:0007669"/>
    <property type="project" value="UniProtKB-UniRule"/>
</dbReference>
<dbReference type="CDD" id="cd09909">
    <property type="entry name" value="HIV-1-like_HR1-HR2"/>
    <property type="match status" value="1"/>
</dbReference>
<dbReference type="FunFam" id="1.10.287.210:FF:000001">
    <property type="entry name" value="Envelope glycoprotein gp160"/>
    <property type="match status" value="1"/>
</dbReference>
<dbReference type="FunFam" id="1.20.5.490:FF:000001">
    <property type="entry name" value="Envelope glycoprotein gp160"/>
    <property type="match status" value="1"/>
</dbReference>
<dbReference type="FunFam" id="2.170.40.20:FF:000003">
    <property type="entry name" value="Envelope glycoprotein gp160"/>
    <property type="match status" value="1"/>
</dbReference>
<dbReference type="FunFam" id="2.170.40.20:FF:000004">
    <property type="entry name" value="Envelope glycoprotein gp160"/>
    <property type="match status" value="1"/>
</dbReference>
<dbReference type="Gene3D" id="1.10.287.210">
    <property type="match status" value="1"/>
</dbReference>
<dbReference type="Gene3D" id="2.170.40.20">
    <property type="entry name" value="Human immunodeficiency virus 1, Gp160, envelope glycoprotein"/>
    <property type="match status" value="2"/>
</dbReference>
<dbReference type="Gene3D" id="1.20.5.490">
    <property type="entry name" value="Single helix bin"/>
    <property type="match status" value="1"/>
</dbReference>
<dbReference type="HAMAP" id="MF_04083">
    <property type="entry name" value="HIV_ENV"/>
    <property type="match status" value="1"/>
</dbReference>
<dbReference type="InterPro" id="IPR036377">
    <property type="entry name" value="Gp120_core_sf"/>
</dbReference>
<dbReference type="InterPro" id="IPR037527">
    <property type="entry name" value="Gp160"/>
</dbReference>
<dbReference type="InterPro" id="IPR000328">
    <property type="entry name" value="GP41-like"/>
</dbReference>
<dbReference type="InterPro" id="IPR000777">
    <property type="entry name" value="HIV1_Gp120"/>
</dbReference>
<dbReference type="Pfam" id="PF00516">
    <property type="entry name" value="GP120"/>
    <property type="match status" value="2"/>
</dbReference>
<dbReference type="Pfam" id="PF00517">
    <property type="entry name" value="GP41"/>
    <property type="match status" value="1"/>
</dbReference>
<dbReference type="SUPFAM" id="SSF56502">
    <property type="entry name" value="gp120 core"/>
    <property type="match status" value="2"/>
</dbReference>
<dbReference type="SUPFAM" id="SSF58069">
    <property type="entry name" value="Virus ectodomain"/>
    <property type="match status" value="1"/>
</dbReference>
<keyword id="KW-0014">AIDS</keyword>
<keyword id="KW-0053">Apoptosis</keyword>
<keyword id="KW-1165">Clathrin-mediated endocytosis of virus by host</keyword>
<keyword id="KW-0165">Cleavage on pair of basic residues</keyword>
<keyword id="KW-0175">Coiled coil</keyword>
<keyword id="KW-1015">Disulfide bond</keyword>
<keyword id="KW-1170">Fusion of virus membrane with host endosomal membrane</keyword>
<keyword id="KW-1168">Fusion of virus membrane with host membrane</keyword>
<keyword id="KW-0325">Glycoprotein</keyword>
<keyword id="KW-1032">Host cell membrane</keyword>
<keyword id="KW-1039">Host endosome</keyword>
<keyword id="KW-1043">Host membrane</keyword>
<keyword id="KW-0945">Host-virus interaction</keyword>
<keyword id="KW-0449">Lipoprotein</keyword>
<keyword id="KW-0472">Membrane</keyword>
<keyword id="KW-0564">Palmitate</keyword>
<keyword id="KW-0732">Signal</keyword>
<keyword id="KW-0812">Transmembrane</keyword>
<keyword id="KW-1133">Transmembrane helix</keyword>
<keyword id="KW-1161">Viral attachment to host cell</keyword>
<keyword id="KW-0261">Viral envelope protein</keyword>
<keyword id="KW-0899">Viral immunoevasion</keyword>
<keyword id="KW-1162">Viral penetration into host cytoplasm</keyword>
<keyword id="KW-0946">Virion</keyword>
<keyword id="KW-1164">Virus endocytosis by host</keyword>
<keyword id="KW-1160">Virus entry into host cell</keyword>
<evidence type="ECO:0000255" key="1">
    <source>
        <dbReference type="HAMAP-Rule" id="MF_04083"/>
    </source>
</evidence>
<evidence type="ECO:0000256" key="2">
    <source>
        <dbReference type="SAM" id="MobiDB-lite"/>
    </source>
</evidence>
<proteinExistence type="inferred from homology"/>
<feature type="signal peptide" evidence="1">
    <location>
        <begin position="1"/>
        <end position="31"/>
    </location>
</feature>
<feature type="chain" id="PRO_0000244657" description="Envelope glycoprotein gp160" evidence="1">
    <location>
        <begin position="32"/>
        <end position="849"/>
    </location>
</feature>
<feature type="chain" id="PRO_0000244658" description="Surface protein gp120" evidence="1">
    <location>
        <begin position="32"/>
        <end position="497"/>
    </location>
</feature>
<feature type="chain" id="PRO_0000244659" description="Transmembrane protein gp41" evidence="1">
    <location>
        <begin position="498"/>
        <end position="849"/>
    </location>
</feature>
<feature type="topological domain" description="Extracellular" evidence="1">
    <location>
        <begin position="32"/>
        <end position="670"/>
    </location>
</feature>
<feature type="transmembrane region" description="Helical" evidence="1">
    <location>
        <begin position="671"/>
        <end position="691"/>
    </location>
</feature>
<feature type="topological domain" description="Cytoplasmic" evidence="1">
    <location>
        <begin position="692"/>
        <end position="849"/>
    </location>
</feature>
<feature type="region of interest" description="V1" evidence="1">
    <location>
        <begin position="130"/>
        <end position="153"/>
    </location>
</feature>
<feature type="region of interest" description="V2" evidence="1">
    <location>
        <begin position="154"/>
        <end position="194"/>
    </location>
</feature>
<feature type="region of interest" description="V3" evidence="1">
    <location>
        <begin position="294"/>
        <end position="327"/>
    </location>
</feature>
<feature type="region of interest" description="CD4-binding loop" evidence="1">
    <location>
        <begin position="360"/>
        <end position="370"/>
    </location>
</feature>
<feature type="region of interest" description="V4" evidence="1">
    <location>
        <begin position="381"/>
        <end position="403"/>
    </location>
</feature>
<feature type="region of interest" description="V5">
    <location>
        <begin position="446"/>
        <end position="457"/>
    </location>
</feature>
<feature type="region of interest" description="V5" evidence="1">
    <location>
        <begin position="448"/>
        <end position="457"/>
    </location>
</feature>
<feature type="region of interest" description="Fusion peptide" evidence="1">
    <location>
        <begin position="498"/>
        <end position="518"/>
    </location>
</feature>
<feature type="region of interest" description="Immunosuppression" evidence="1">
    <location>
        <begin position="560"/>
        <end position="578"/>
    </location>
</feature>
<feature type="region of interest" description="MPER; binding to GalCer" evidence="1">
    <location>
        <begin position="648"/>
        <end position="669"/>
    </location>
</feature>
<feature type="region of interest" description="Disordered" evidence="2">
    <location>
        <begin position="709"/>
        <end position="729"/>
    </location>
</feature>
<feature type="coiled-coil region" evidence="1">
    <location>
        <begin position="619"/>
        <end position="653"/>
    </location>
</feature>
<feature type="short sequence motif" description="YXXL motif; contains endocytosis signal" evidence="1">
    <location>
        <begin position="698"/>
        <end position="701"/>
    </location>
</feature>
<feature type="short sequence motif" description="Di-leucine internalization motif" evidence="1">
    <location>
        <begin position="848"/>
        <end position="849"/>
    </location>
</feature>
<feature type="site" description="Cleavage; by host furin" evidence="1">
    <location>
        <begin position="497"/>
        <end position="498"/>
    </location>
</feature>
<feature type="lipid moiety-binding region" description="S-palmitoyl cysteine; by host" evidence="1">
    <location>
        <position position="750"/>
    </location>
</feature>
<feature type="glycosylation site" description="N-linked (GlcNAc...) asparagine; by host" evidence="1">
    <location>
        <position position="87"/>
    </location>
</feature>
<feature type="glycosylation site" description="N-linked (GlcNAc...) asparagine; by host" evidence="1">
    <location>
        <position position="129"/>
    </location>
</feature>
<feature type="glycosylation site" description="N-linked (GlcNAc...) asparagine; by host" evidence="1">
    <location>
        <position position="137"/>
    </location>
</feature>
<feature type="glycosylation site" description="N-linked (GlcNAc...) asparagine; by host" evidence="1">
    <location>
        <position position="142"/>
    </location>
</feature>
<feature type="glycosylation site" description="N-linked (GlcNAc...) asparagine; by host" evidence="1">
    <location>
        <position position="153"/>
    </location>
</feature>
<feature type="glycosylation site" description="N-linked (GlcNAc...) asparagine; by host" evidence="1">
    <location>
        <position position="185"/>
    </location>
</feature>
<feature type="glycosylation site" description="N-linked (GlcNAc...) asparagine; by host" evidence="1">
    <location>
        <position position="195"/>
    </location>
</feature>
<feature type="glycosylation site" description="N-linked (GlcNAc...) asparagine; by host" evidence="1">
    <location>
        <position position="232"/>
    </location>
</feature>
<feature type="glycosylation site" description="N-linked (GlcNAc...) asparagine; by host" evidence="1">
    <location>
        <position position="239"/>
    </location>
</feature>
<feature type="glycosylation site" description="N-linked (GlcNAc...) asparagine; by host" evidence="1">
    <location>
        <position position="260"/>
    </location>
</feature>
<feature type="glycosylation site" description="N-linked (GlcNAc...) asparagine; by host" evidence="1">
    <location>
        <position position="274"/>
    </location>
</feature>
<feature type="glycosylation site" description="N-linked (GlcNAc...) asparagine; by host" evidence="1">
    <location>
        <position position="287"/>
    </location>
</feature>
<feature type="glycosylation site" description="N-linked (GlcNAc...) asparagine; by host" evidence="1">
    <location>
        <position position="299"/>
    </location>
</feature>
<feature type="glycosylation site" description="N-linked (GlcNAc...) asparagine; by host" evidence="1">
    <location>
        <position position="329"/>
    </location>
</feature>
<feature type="glycosylation site" description="N-linked (GlcNAc...) asparagine; by host" evidence="1">
    <location>
        <position position="341"/>
    </location>
</feature>
<feature type="glycosylation site" description="N-linked (GlcNAc...) asparagine; by host" evidence="1">
    <location>
        <position position="354"/>
    </location>
</feature>
<feature type="glycosylation site" description="N-linked (GlcNAc...) asparagine; by host" evidence="1">
    <location>
        <position position="358"/>
    </location>
</feature>
<feature type="glycosylation site" description="N-linked (GlcNAc...) asparagine; by host" evidence="1">
    <location>
        <position position="382"/>
    </location>
</feature>
<feature type="glycosylation site" description="N-linked (GlcNAc...) asparagine; by host" evidence="1">
    <location>
        <position position="390"/>
    </location>
</feature>
<feature type="glycosylation site" description="N-linked (GlcNAc...) asparagine; by host" evidence="1">
    <location>
        <position position="396"/>
    </location>
</feature>
<feature type="glycosylation site" description="N-linked (GlcNAc...) asparagine; by host" evidence="1">
    <location>
        <position position="433"/>
    </location>
</feature>
<feature type="glycosylation site" description="N-linked (GlcNAc...) asparagine; by host" evidence="1">
    <location>
        <position position="447"/>
    </location>
</feature>
<feature type="glycosylation site" description="N-linked (GlcNAc...) asparagine; by host" evidence="1">
    <location>
        <position position="597"/>
    </location>
</feature>
<feature type="glycosylation site" description="N-linked (GlcNAc...) asparagine; by host" evidence="1">
    <location>
        <position position="602"/>
    </location>
</feature>
<feature type="glycosylation site" description="N-linked (GlcNAc...) asparagine; by host" evidence="1">
    <location>
        <position position="611"/>
    </location>
</feature>
<feature type="glycosylation site" description="N-linked (GlcNAc...) asparagine; by host" evidence="1">
    <location>
        <position position="623"/>
    </location>
</feature>
<feature type="disulfide bond" evidence="1">
    <location>
        <begin position="53"/>
        <end position="73"/>
    </location>
</feature>
<feature type="disulfide bond" evidence="1">
    <location>
        <begin position="118"/>
        <end position="203"/>
    </location>
</feature>
<feature type="disulfide bond" evidence="1">
    <location>
        <begin position="125"/>
        <end position="194"/>
    </location>
</feature>
<feature type="disulfide bond" evidence="1">
    <location>
        <begin position="130"/>
        <end position="154"/>
    </location>
</feature>
<feature type="disulfide bond" evidence="1">
    <location>
        <begin position="216"/>
        <end position="245"/>
    </location>
</feature>
<feature type="disulfide bond" evidence="1">
    <location>
        <begin position="226"/>
        <end position="237"/>
    </location>
</feature>
<feature type="disulfide bond" evidence="1">
    <location>
        <begin position="294"/>
        <end position="328"/>
    </location>
</feature>
<feature type="disulfide bond" evidence="1">
    <location>
        <begin position="374"/>
        <end position="430"/>
    </location>
</feature>
<feature type="disulfide bond" evidence="1">
    <location>
        <begin position="381"/>
        <end position="403"/>
    </location>
</feature>
<feature type="disulfide bond" evidence="1">
    <location>
        <begin position="584"/>
        <end position="590"/>
    </location>
</feature>
<reference key="1">
    <citation type="journal article" date="1998" name="J. Virol.">
        <title>A comprehensive panel of near-full-length clones and reference sequences for non-subtype B isolates of human immunodeficiency virus type 1.</title>
        <authorList>
            <person name="Gao F."/>
            <person name="Robertson D.L."/>
            <person name="Carruthers C.D."/>
            <person name="Morrison S.G."/>
            <person name="Jian B."/>
            <person name="Chen Y."/>
            <person name="Barre-Sinoussi F."/>
            <person name="Girard M."/>
            <person name="Srinivasan A."/>
            <person name="Abimiku A.G."/>
            <person name="Shaw G.M."/>
            <person name="Sharp P.M."/>
            <person name="Hahn B.H."/>
        </authorList>
    </citation>
    <scope>NUCLEOTIDE SEQUENCE [GENOMIC DNA]</scope>
</reference>
<reference key="2">
    <citation type="journal article" date="2003" name="APMIS">
        <title>Pathogens target DC-SIGN to influence their fate DC-SIGN functions as a pathogen receptor with broad specificity.</title>
        <authorList>
            <person name="Geijtenbeek T.B."/>
            <person name="van Kooyk Y."/>
        </authorList>
    </citation>
    <scope>REVIEW</scope>
</reference>
<reference key="3">
    <citation type="journal article" date="2003" name="Biochim. Biophys. Acta">
        <title>The HIV Env-mediated fusion reaction.</title>
        <authorList>
            <person name="Gallo S.A."/>
            <person name="Finnegan C.M."/>
            <person name="Viard M."/>
            <person name="Raviv Y."/>
            <person name="Dimitrov A."/>
            <person name="Rawat S.S."/>
            <person name="Puri A."/>
            <person name="Durell S."/>
            <person name="Blumenthal R."/>
        </authorList>
    </citation>
    <scope>REVIEW</scope>
</reference>
<reference key="4">
    <citation type="journal article" date="2005" name="Cell Death Differ.">
        <title>Mechanisms of apoptosis induction by the HIV-1 envelope.</title>
        <authorList>
            <person name="Perfettini J.-L."/>
            <person name="Castedo M."/>
            <person name="Roumier T."/>
            <person name="Andreau K."/>
            <person name="Nardacci R."/>
            <person name="Piacentini M."/>
            <person name="Kroemer G."/>
        </authorList>
    </citation>
    <scope>REVIEW</scope>
</reference>
<reference key="5">
    <citation type="journal article" date="2005" name="AIDS Res. Hum. Retroviruses">
        <title>V3: HIV's switch-hitter.</title>
        <authorList>
            <person name="Hartley O."/>
            <person name="Klasse P.J."/>
            <person name="Sattentau Q.J."/>
            <person name="Moore J.P."/>
        </authorList>
    </citation>
    <scope>REVIEW</scope>
</reference>
<reference key="6">
    <citation type="journal article" date="2005" name="Drugs">
        <title>Emerging drug targets for antiretroviral therapy.</title>
        <authorList>
            <person name="Reeves J.D."/>
            <person name="Piefer A.J."/>
        </authorList>
    </citation>
    <scope>REVIEW</scope>
</reference>
<reference key="7">
    <citation type="journal article" date="2006" name="EMBO J.">
        <title>HIV and the chemokine system: 10 years later.</title>
        <authorList>
            <person name="Lusso P."/>
        </authorList>
    </citation>
    <scope>REVIEW</scope>
</reference>